<name>MURB_ORITI</name>
<protein>
    <recommendedName>
        <fullName evidence="1">UDP-N-acetylenolpyruvoylglucosamine reductase</fullName>
        <ecNumber evidence="1">1.3.1.98</ecNumber>
    </recommendedName>
    <alternativeName>
        <fullName evidence="1">UDP-N-acetylmuramate dehydrogenase</fullName>
    </alternativeName>
</protein>
<reference key="1">
    <citation type="journal article" date="2008" name="DNA Res.">
        <title>The whole-genome sequencing of the obligate intracellular bacterium Orientia tsutsugamushi revealed massive gene amplification during reductive genome evolution.</title>
        <authorList>
            <person name="Nakayama K."/>
            <person name="Yamashita A."/>
            <person name="Kurokawa K."/>
            <person name="Morimoto T."/>
            <person name="Ogawa M."/>
            <person name="Fukuhara M."/>
            <person name="Urakami H."/>
            <person name="Ohnishi M."/>
            <person name="Uchiyama I."/>
            <person name="Ogura Y."/>
            <person name="Ooka T."/>
            <person name="Oshima K."/>
            <person name="Tamura A."/>
            <person name="Hattori M."/>
            <person name="Hayashi T."/>
        </authorList>
    </citation>
    <scope>NUCLEOTIDE SEQUENCE [LARGE SCALE GENOMIC DNA]</scope>
    <source>
        <strain>Ikeda</strain>
    </source>
</reference>
<feature type="chain" id="PRO_1000191437" description="UDP-N-acetylenolpyruvoylglucosamine reductase">
    <location>
        <begin position="1"/>
        <end position="303"/>
    </location>
</feature>
<feature type="domain" description="FAD-binding PCMH-type" evidence="1">
    <location>
        <begin position="27"/>
        <end position="217"/>
    </location>
</feature>
<feature type="active site" evidence="1">
    <location>
        <position position="175"/>
    </location>
</feature>
<feature type="active site" description="Proton donor" evidence="1">
    <location>
        <position position="224"/>
    </location>
</feature>
<feature type="active site" evidence="1">
    <location>
        <position position="294"/>
    </location>
</feature>
<proteinExistence type="inferred from homology"/>
<comment type="function">
    <text evidence="1">Cell wall formation.</text>
</comment>
<comment type="catalytic activity">
    <reaction evidence="1">
        <text>UDP-N-acetyl-alpha-D-muramate + NADP(+) = UDP-N-acetyl-3-O-(1-carboxyvinyl)-alpha-D-glucosamine + NADPH + H(+)</text>
        <dbReference type="Rhea" id="RHEA:12248"/>
        <dbReference type="ChEBI" id="CHEBI:15378"/>
        <dbReference type="ChEBI" id="CHEBI:57783"/>
        <dbReference type="ChEBI" id="CHEBI:58349"/>
        <dbReference type="ChEBI" id="CHEBI:68483"/>
        <dbReference type="ChEBI" id="CHEBI:70757"/>
        <dbReference type="EC" id="1.3.1.98"/>
    </reaction>
</comment>
<comment type="cofactor">
    <cofactor evidence="1">
        <name>FAD</name>
        <dbReference type="ChEBI" id="CHEBI:57692"/>
    </cofactor>
</comment>
<comment type="pathway">
    <text evidence="1">Cell wall biogenesis; peptidoglycan biosynthesis.</text>
</comment>
<comment type="subcellular location">
    <subcellularLocation>
        <location evidence="1">Cytoplasm</location>
    </subcellularLocation>
</comment>
<comment type="similarity">
    <text evidence="1">Belongs to the MurB family.</text>
</comment>
<organism>
    <name type="scientific">Orientia tsutsugamushi (strain Ikeda)</name>
    <name type="common">Rickettsia tsutsugamushi</name>
    <dbReference type="NCBI Taxonomy" id="334380"/>
    <lineage>
        <taxon>Bacteria</taxon>
        <taxon>Pseudomonadati</taxon>
        <taxon>Pseudomonadota</taxon>
        <taxon>Alphaproteobacteria</taxon>
        <taxon>Rickettsiales</taxon>
        <taxon>Rickettsiaceae</taxon>
        <taxon>Rickettsieae</taxon>
        <taxon>Orientia</taxon>
    </lineage>
</organism>
<dbReference type="EC" id="1.3.1.98" evidence="1"/>
<dbReference type="EMBL" id="AP008981">
    <property type="protein sequence ID" value="BAG40406.1"/>
    <property type="molecule type" value="Genomic_DNA"/>
</dbReference>
<dbReference type="RefSeq" id="WP_012461532.1">
    <property type="nucleotide sequence ID" value="NC_010793.1"/>
</dbReference>
<dbReference type="SMR" id="B3CSQ9"/>
<dbReference type="KEGG" id="ott:OTT_0948"/>
<dbReference type="HOGENOM" id="CLU_035304_1_0_5"/>
<dbReference type="OrthoDB" id="9804753at2"/>
<dbReference type="UniPathway" id="UPA00219"/>
<dbReference type="Proteomes" id="UP000001033">
    <property type="component" value="Chromosome"/>
</dbReference>
<dbReference type="GO" id="GO:0005829">
    <property type="term" value="C:cytosol"/>
    <property type="evidence" value="ECO:0007669"/>
    <property type="project" value="TreeGrafter"/>
</dbReference>
<dbReference type="GO" id="GO:0071949">
    <property type="term" value="F:FAD binding"/>
    <property type="evidence" value="ECO:0007669"/>
    <property type="project" value="InterPro"/>
</dbReference>
<dbReference type="GO" id="GO:0008762">
    <property type="term" value="F:UDP-N-acetylmuramate dehydrogenase activity"/>
    <property type="evidence" value="ECO:0007669"/>
    <property type="project" value="UniProtKB-UniRule"/>
</dbReference>
<dbReference type="GO" id="GO:0051301">
    <property type="term" value="P:cell division"/>
    <property type="evidence" value="ECO:0007669"/>
    <property type="project" value="UniProtKB-KW"/>
</dbReference>
<dbReference type="GO" id="GO:0071555">
    <property type="term" value="P:cell wall organization"/>
    <property type="evidence" value="ECO:0007669"/>
    <property type="project" value="UniProtKB-KW"/>
</dbReference>
<dbReference type="GO" id="GO:0009252">
    <property type="term" value="P:peptidoglycan biosynthetic process"/>
    <property type="evidence" value="ECO:0007669"/>
    <property type="project" value="UniProtKB-UniRule"/>
</dbReference>
<dbReference type="GO" id="GO:0008360">
    <property type="term" value="P:regulation of cell shape"/>
    <property type="evidence" value="ECO:0007669"/>
    <property type="project" value="UniProtKB-KW"/>
</dbReference>
<dbReference type="Gene3D" id="3.30.465.10">
    <property type="match status" value="1"/>
</dbReference>
<dbReference type="Gene3D" id="3.90.78.10">
    <property type="entry name" value="UDP-N-acetylenolpyruvoylglucosamine reductase, C-terminal domain"/>
    <property type="match status" value="1"/>
</dbReference>
<dbReference type="Gene3D" id="3.30.43.10">
    <property type="entry name" value="Uridine Diphospho-n-acetylenolpyruvylglucosamine Reductase, domain 2"/>
    <property type="match status" value="1"/>
</dbReference>
<dbReference type="HAMAP" id="MF_00037">
    <property type="entry name" value="MurB"/>
    <property type="match status" value="1"/>
</dbReference>
<dbReference type="InterPro" id="IPR016166">
    <property type="entry name" value="FAD-bd_PCMH"/>
</dbReference>
<dbReference type="InterPro" id="IPR036318">
    <property type="entry name" value="FAD-bd_PCMH-like_sf"/>
</dbReference>
<dbReference type="InterPro" id="IPR016167">
    <property type="entry name" value="FAD-bd_PCMH_sub1"/>
</dbReference>
<dbReference type="InterPro" id="IPR016169">
    <property type="entry name" value="FAD-bd_PCMH_sub2"/>
</dbReference>
<dbReference type="InterPro" id="IPR003170">
    <property type="entry name" value="MurB"/>
</dbReference>
<dbReference type="InterPro" id="IPR011601">
    <property type="entry name" value="MurB_C"/>
</dbReference>
<dbReference type="InterPro" id="IPR036635">
    <property type="entry name" value="MurB_C_sf"/>
</dbReference>
<dbReference type="InterPro" id="IPR006094">
    <property type="entry name" value="Oxid_FAD_bind_N"/>
</dbReference>
<dbReference type="NCBIfam" id="TIGR00179">
    <property type="entry name" value="murB"/>
    <property type="match status" value="1"/>
</dbReference>
<dbReference type="NCBIfam" id="NF010480">
    <property type="entry name" value="PRK13905.1"/>
    <property type="match status" value="1"/>
</dbReference>
<dbReference type="PANTHER" id="PTHR21071">
    <property type="entry name" value="UDP-N-ACETYLENOLPYRUVOYLGLUCOSAMINE REDUCTASE"/>
    <property type="match status" value="1"/>
</dbReference>
<dbReference type="PANTHER" id="PTHR21071:SF4">
    <property type="entry name" value="UDP-N-ACETYLENOLPYRUVOYLGLUCOSAMINE REDUCTASE"/>
    <property type="match status" value="1"/>
</dbReference>
<dbReference type="Pfam" id="PF01565">
    <property type="entry name" value="FAD_binding_4"/>
    <property type="match status" value="1"/>
</dbReference>
<dbReference type="Pfam" id="PF02873">
    <property type="entry name" value="MurB_C"/>
    <property type="match status" value="1"/>
</dbReference>
<dbReference type="SUPFAM" id="SSF56176">
    <property type="entry name" value="FAD-binding/transporter-associated domain-like"/>
    <property type="match status" value="1"/>
</dbReference>
<dbReference type="SUPFAM" id="SSF56194">
    <property type="entry name" value="Uridine diphospho-N-Acetylenolpyruvylglucosamine reductase, MurB, C-terminal domain"/>
    <property type="match status" value="1"/>
</dbReference>
<dbReference type="PROSITE" id="PS51387">
    <property type="entry name" value="FAD_PCMH"/>
    <property type="match status" value="1"/>
</dbReference>
<evidence type="ECO:0000255" key="1">
    <source>
        <dbReference type="HAMAP-Rule" id="MF_00037"/>
    </source>
</evidence>
<gene>
    <name evidence="1" type="primary">murB</name>
    <name type="ordered locus">OTT_0948</name>
</gene>
<keyword id="KW-0131">Cell cycle</keyword>
<keyword id="KW-0132">Cell division</keyword>
<keyword id="KW-0133">Cell shape</keyword>
<keyword id="KW-0961">Cell wall biogenesis/degradation</keyword>
<keyword id="KW-0963">Cytoplasm</keyword>
<keyword id="KW-0274">FAD</keyword>
<keyword id="KW-0285">Flavoprotein</keyword>
<keyword id="KW-0521">NADP</keyword>
<keyword id="KW-0560">Oxidoreductase</keyword>
<keyword id="KW-0573">Peptidoglycan synthesis</keyword>
<sequence>MSTVISLPKVNGEYRKNFKLSHLTWFKVGGISQVFYKPKDEHDLSYFLANLQSNIKITVLGAGSNLLIRDNGIDGVTIKLGRSFNEINFVKNNHYNIISVGAGTLNYDVAKFCLQHNLGGLEFLVGIPGTIGGGIAMNAGAYGQEFKDVVYSVEALDRSGNKHIFLSKDLNFEYRQCIVNGFLIFTKTNLICYNDSKPSISQKLQKIQTVRKLTQPINQKTAGSAFRNTNNYKAWQLIDKVGLRGHSIGGAQVSNLHCNFLINNGNATASDIENLGELIRKKVFDHTGITLEWEIKIVGKKSL</sequence>
<accession>B3CSQ9</accession>